<name>ATPA_PHYPA</name>
<proteinExistence type="inferred from homology"/>
<feature type="chain" id="PRO_0000238433" description="ATP synthase subunit alpha, chloroplastic">
    <location>
        <begin position="1"/>
        <end position="507"/>
    </location>
</feature>
<feature type="binding site" evidence="1">
    <location>
        <begin position="170"/>
        <end position="177"/>
    </location>
    <ligand>
        <name>ATP</name>
        <dbReference type="ChEBI" id="CHEBI:30616"/>
    </ligand>
</feature>
<feature type="site" description="Required for activity" evidence="1">
    <location>
        <position position="363"/>
    </location>
</feature>
<protein>
    <recommendedName>
        <fullName evidence="1">ATP synthase subunit alpha, chloroplastic</fullName>
        <ecNumber evidence="1">7.1.2.2</ecNumber>
    </recommendedName>
    <alternativeName>
        <fullName evidence="1">ATP synthase F1 sector subunit alpha</fullName>
    </alternativeName>
    <alternativeName>
        <fullName evidence="1">F-ATPase subunit alpha</fullName>
    </alternativeName>
</protein>
<keyword id="KW-0066">ATP synthesis</keyword>
<keyword id="KW-0067">ATP-binding</keyword>
<keyword id="KW-0139">CF(1)</keyword>
<keyword id="KW-0150">Chloroplast</keyword>
<keyword id="KW-0375">Hydrogen ion transport</keyword>
<keyword id="KW-0406">Ion transport</keyword>
<keyword id="KW-0472">Membrane</keyword>
<keyword id="KW-0547">Nucleotide-binding</keyword>
<keyword id="KW-0934">Plastid</keyword>
<keyword id="KW-1185">Reference proteome</keyword>
<keyword id="KW-0793">Thylakoid</keyword>
<keyword id="KW-1278">Translocase</keyword>
<keyword id="KW-0813">Transport</keyword>
<evidence type="ECO:0000255" key="1">
    <source>
        <dbReference type="HAMAP-Rule" id="MF_01346"/>
    </source>
</evidence>
<sequence>MVKIRPDEISSIIRKQIEDYSQEIKVVNVGTVLQVGDGIARIYGLDKVMAGELVEFEDNSIGIALNLESDNVGVVLMGDGLTIQEGSSVKATGKIAQIPVSDGYLGRVVNALAQPIDGKGQIPASEFRLIESSAPGIISRRSVYEPMQTGLIAIDSMIPIGRGQRELIIGDRQTGKTAVATDTILNQKGQNVICVYVAIGQKASSVAQVVNTFEERGALEYTIVVAEAANSPATLQYLAPYTGAALAEYFMYRKQHTLIIYDDLSKQAQAYRQMSLLLRRPPGREAYPGDVFYLHSRLLERAAKLSSQLGEGSMTALPIVETQAGDVSAYIPTNVISITDGQIFLSADLFNAGIRPAINVGISVSRVGSAAQIKAMKQVAGKLKLELAQFAELEAFAQFASDLDKATQNQLARGQRLRELLKQSQSSPLAVEEQVATIYTGVNGYLDVLEVDQVKKFLVQLREYLTTNKPQFAEIIRSTKVFTEQAEGILKEAIKEHTELFLLQEDK</sequence>
<gene>
    <name evidence="1" type="primary">atpA</name>
</gene>
<accession>Q6YXK3</accession>
<organism>
    <name type="scientific">Physcomitrium patens</name>
    <name type="common">Spreading-leaved earth moss</name>
    <name type="synonym">Physcomitrella patens</name>
    <dbReference type="NCBI Taxonomy" id="3218"/>
    <lineage>
        <taxon>Eukaryota</taxon>
        <taxon>Viridiplantae</taxon>
        <taxon>Streptophyta</taxon>
        <taxon>Embryophyta</taxon>
        <taxon>Bryophyta</taxon>
        <taxon>Bryophytina</taxon>
        <taxon>Bryopsida</taxon>
        <taxon>Funariidae</taxon>
        <taxon>Funariales</taxon>
        <taxon>Funariaceae</taxon>
        <taxon>Physcomitrium</taxon>
    </lineage>
</organism>
<dbReference type="EC" id="7.1.2.2" evidence="1"/>
<dbReference type="EMBL" id="AP005672">
    <property type="protein sequence ID" value="BAC85066.1"/>
    <property type="molecule type" value="Genomic_DNA"/>
</dbReference>
<dbReference type="RefSeq" id="NP_904216.1">
    <property type="nucleotide sequence ID" value="NC_005087.2"/>
</dbReference>
<dbReference type="RefSeq" id="YP_009477546.1">
    <property type="nucleotide sequence ID" value="NC_037465.1"/>
</dbReference>
<dbReference type="SMR" id="Q6YXK3"/>
<dbReference type="FunCoup" id="Q6YXK3">
    <property type="interactions" value="478"/>
</dbReference>
<dbReference type="STRING" id="3218.Q6YXK3"/>
<dbReference type="GeneID" id="2546698"/>
<dbReference type="GeneID" id="36487180"/>
<dbReference type="KEGG" id="ppp:2546698"/>
<dbReference type="InParanoid" id="Q6YXK3"/>
<dbReference type="OrthoDB" id="9805536at2759"/>
<dbReference type="Proteomes" id="UP000006727">
    <property type="component" value="Chloroplast"/>
</dbReference>
<dbReference type="GO" id="GO:0009535">
    <property type="term" value="C:chloroplast thylakoid membrane"/>
    <property type="evidence" value="ECO:0007669"/>
    <property type="project" value="UniProtKB-SubCell"/>
</dbReference>
<dbReference type="GO" id="GO:0045259">
    <property type="term" value="C:proton-transporting ATP synthase complex"/>
    <property type="evidence" value="ECO:0007669"/>
    <property type="project" value="UniProtKB-KW"/>
</dbReference>
<dbReference type="GO" id="GO:0043531">
    <property type="term" value="F:ADP binding"/>
    <property type="evidence" value="ECO:0000318"/>
    <property type="project" value="GO_Central"/>
</dbReference>
<dbReference type="GO" id="GO:0005524">
    <property type="term" value="F:ATP binding"/>
    <property type="evidence" value="ECO:0000318"/>
    <property type="project" value="GO_Central"/>
</dbReference>
<dbReference type="GO" id="GO:0046933">
    <property type="term" value="F:proton-transporting ATP synthase activity, rotational mechanism"/>
    <property type="evidence" value="ECO:0007669"/>
    <property type="project" value="UniProtKB-UniRule"/>
</dbReference>
<dbReference type="GO" id="GO:0015986">
    <property type="term" value="P:proton motive force-driven ATP synthesis"/>
    <property type="evidence" value="ECO:0000318"/>
    <property type="project" value="GO_Central"/>
</dbReference>
<dbReference type="CDD" id="cd18113">
    <property type="entry name" value="ATP-synt_F1_alpha_C"/>
    <property type="match status" value="1"/>
</dbReference>
<dbReference type="CDD" id="cd18116">
    <property type="entry name" value="ATP-synt_F1_alpha_N"/>
    <property type="match status" value="1"/>
</dbReference>
<dbReference type="CDD" id="cd01132">
    <property type="entry name" value="F1-ATPase_alpha_CD"/>
    <property type="match status" value="1"/>
</dbReference>
<dbReference type="FunFam" id="1.20.150.20:FF:000001">
    <property type="entry name" value="ATP synthase subunit alpha"/>
    <property type="match status" value="1"/>
</dbReference>
<dbReference type="FunFam" id="2.40.30.20:FF:000001">
    <property type="entry name" value="ATP synthase subunit alpha"/>
    <property type="match status" value="1"/>
</dbReference>
<dbReference type="FunFam" id="3.40.50.300:FF:000002">
    <property type="entry name" value="ATP synthase subunit alpha"/>
    <property type="match status" value="1"/>
</dbReference>
<dbReference type="Gene3D" id="2.40.30.20">
    <property type="match status" value="1"/>
</dbReference>
<dbReference type="Gene3D" id="1.20.150.20">
    <property type="entry name" value="ATP synthase alpha/beta chain, C-terminal domain"/>
    <property type="match status" value="1"/>
</dbReference>
<dbReference type="Gene3D" id="3.40.50.300">
    <property type="entry name" value="P-loop containing nucleotide triphosphate hydrolases"/>
    <property type="match status" value="1"/>
</dbReference>
<dbReference type="HAMAP" id="MF_01346">
    <property type="entry name" value="ATP_synth_alpha_bact"/>
    <property type="match status" value="1"/>
</dbReference>
<dbReference type="InterPro" id="IPR023366">
    <property type="entry name" value="ATP_synth_asu-like_sf"/>
</dbReference>
<dbReference type="InterPro" id="IPR000793">
    <property type="entry name" value="ATP_synth_asu_C"/>
</dbReference>
<dbReference type="InterPro" id="IPR038376">
    <property type="entry name" value="ATP_synth_asu_C_sf"/>
</dbReference>
<dbReference type="InterPro" id="IPR033732">
    <property type="entry name" value="ATP_synth_F1_a_nt-bd_dom"/>
</dbReference>
<dbReference type="InterPro" id="IPR005294">
    <property type="entry name" value="ATP_synth_F1_asu"/>
</dbReference>
<dbReference type="InterPro" id="IPR020003">
    <property type="entry name" value="ATPase_a/bsu_AS"/>
</dbReference>
<dbReference type="InterPro" id="IPR004100">
    <property type="entry name" value="ATPase_F1/V1/A1_a/bsu_N"/>
</dbReference>
<dbReference type="InterPro" id="IPR036121">
    <property type="entry name" value="ATPase_F1/V1/A1_a/bsu_N_sf"/>
</dbReference>
<dbReference type="InterPro" id="IPR000194">
    <property type="entry name" value="ATPase_F1/V1/A1_a/bsu_nucl-bd"/>
</dbReference>
<dbReference type="InterPro" id="IPR027417">
    <property type="entry name" value="P-loop_NTPase"/>
</dbReference>
<dbReference type="NCBIfam" id="TIGR00962">
    <property type="entry name" value="atpA"/>
    <property type="match status" value="1"/>
</dbReference>
<dbReference type="NCBIfam" id="NF009884">
    <property type="entry name" value="PRK13343.1"/>
    <property type="match status" value="1"/>
</dbReference>
<dbReference type="PANTHER" id="PTHR48082">
    <property type="entry name" value="ATP SYNTHASE SUBUNIT ALPHA, MITOCHONDRIAL"/>
    <property type="match status" value="1"/>
</dbReference>
<dbReference type="PANTHER" id="PTHR48082:SF2">
    <property type="entry name" value="ATP SYNTHASE SUBUNIT ALPHA, MITOCHONDRIAL"/>
    <property type="match status" value="1"/>
</dbReference>
<dbReference type="Pfam" id="PF00006">
    <property type="entry name" value="ATP-synt_ab"/>
    <property type="match status" value="1"/>
</dbReference>
<dbReference type="Pfam" id="PF00306">
    <property type="entry name" value="ATP-synt_ab_C"/>
    <property type="match status" value="1"/>
</dbReference>
<dbReference type="Pfam" id="PF02874">
    <property type="entry name" value="ATP-synt_ab_N"/>
    <property type="match status" value="1"/>
</dbReference>
<dbReference type="PIRSF" id="PIRSF039088">
    <property type="entry name" value="F_ATPase_subunit_alpha"/>
    <property type="match status" value="1"/>
</dbReference>
<dbReference type="SUPFAM" id="SSF47917">
    <property type="entry name" value="C-terminal domain of alpha and beta subunits of F1 ATP synthase"/>
    <property type="match status" value="1"/>
</dbReference>
<dbReference type="SUPFAM" id="SSF50615">
    <property type="entry name" value="N-terminal domain of alpha and beta subunits of F1 ATP synthase"/>
    <property type="match status" value="1"/>
</dbReference>
<dbReference type="SUPFAM" id="SSF52540">
    <property type="entry name" value="P-loop containing nucleoside triphosphate hydrolases"/>
    <property type="match status" value="1"/>
</dbReference>
<dbReference type="PROSITE" id="PS00152">
    <property type="entry name" value="ATPASE_ALPHA_BETA"/>
    <property type="match status" value="1"/>
</dbReference>
<reference key="1">
    <citation type="journal article" date="2003" name="Nucleic Acids Res.">
        <title>Complete chloroplast DNA sequence of the moss Physcomitrella patens: evidence for the loss and relocation of rpoA from the chloroplast to the nucleus.</title>
        <authorList>
            <person name="Sugiura C."/>
            <person name="Kobayashi Y."/>
            <person name="Setsuyuki A."/>
            <person name="Sugita C."/>
            <person name="Sugita M."/>
        </authorList>
    </citation>
    <scope>NUCLEOTIDE SEQUENCE [LARGE SCALE GENOMIC DNA]</scope>
    <source>
        <strain>cv. Gransden 2004</strain>
    </source>
</reference>
<geneLocation type="chloroplast"/>
<comment type="function">
    <text evidence="1">Produces ATP from ADP in the presence of a proton gradient across the membrane. The alpha chain is a regulatory subunit.</text>
</comment>
<comment type="catalytic activity">
    <reaction evidence="1">
        <text>ATP + H2O + 4 H(+)(in) = ADP + phosphate + 5 H(+)(out)</text>
        <dbReference type="Rhea" id="RHEA:57720"/>
        <dbReference type="ChEBI" id="CHEBI:15377"/>
        <dbReference type="ChEBI" id="CHEBI:15378"/>
        <dbReference type="ChEBI" id="CHEBI:30616"/>
        <dbReference type="ChEBI" id="CHEBI:43474"/>
        <dbReference type="ChEBI" id="CHEBI:456216"/>
        <dbReference type="EC" id="7.1.2.2"/>
    </reaction>
</comment>
<comment type="subunit">
    <text evidence="1">F-type ATPases have 2 components, CF(1) - the catalytic core - and CF(0) - the membrane proton channel. CF(1) has five subunits: alpha(3), beta(3), gamma(1), delta(1), epsilon(1). CF(0) has four main subunits: a, b, b' and c.</text>
</comment>
<comment type="subcellular location">
    <subcellularLocation>
        <location evidence="1">Plastid</location>
        <location evidence="1">Chloroplast thylakoid membrane</location>
        <topology evidence="1">Peripheral membrane protein</topology>
    </subcellularLocation>
</comment>
<comment type="similarity">
    <text evidence="1">Belongs to the ATPase alpha/beta chains family.</text>
</comment>